<dbReference type="EMBL" id="AE013218">
    <property type="protein sequence ID" value="AAM67881.1"/>
    <property type="molecule type" value="Genomic_DNA"/>
</dbReference>
<dbReference type="RefSeq" id="WP_011053848.1">
    <property type="nucleotide sequence ID" value="NC_004061.1"/>
</dbReference>
<dbReference type="SMR" id="Q8K9K7"/>
<dbReference type="STRING" id="198804.BUsg_327"/>
<dbReference type="GeneID" id="93003798"/>
<dbReference type="KEGG" id="bas:BUsg_327"/>
<dbReference type="eggNOG" id="COG1843">
    <property type="taxonomic scope" value="Bacteria"/>
</dbReference>
<dbReference type="HOGENOM" id="CLU_047535_0_2_6"/>
<dbReference type="Proteomes" id="UP000000416">
    <property type="component" value="Chromosome"/>
</dbReference>
<dbReference type="GO" id="GO:0044781">
    <property type="term" value="P:bacterial-type flagellum organization"/>
    <property type="evidence" value="ECO:0007669"/>
    <property type="project" value="UniProtKB-KW"/>
</dbReference>
<dbReference type="Gene3D" id="2.30.30.910">
    <property type="match status" value="1"/>
</dbReference>
<dbReference type="Gene3D" id="2.60.40.4070">
    <property type="match status" value="1"/>
</dbReference>
<dbReference type="InterPro" id="IPR005648">
    <property type="entry name" value="FlgD"/>
</dbReference>
<dbReference type="InterPro" id="IPR025965">
    <property type="entry name" value="FlgD/Vpr_Ig-like"/>
</dbReference>
<dbReference type="InterPro" id="IPR025963">
    <property type="entry name" value="FLgD_Tudor"/>
</dbReference>
<dbReference type="Pfam" id="PF03963">
    <property type="entry name" value="FlgD"/>
    <property type="match status" value="1"/>
</dbReference>
<dbReference type="Pfam" id="PF13860">
    <property type="entry name" value="FlgD_ig"/>
    <property type="match status" value="1"/>
</dbReference>
<dbReference type="Pfam" id="PF13861">
    <property type="entry name" value="FLgD_tudor"/>
    <property type="match status" value="1"/>
</dbReference>
<comment type="function">
    <text evidence="1">Required for flagellar hook formation. May act as a scaffolding protein (By similarity).</text>
</comment>
<comment type="similarity">
    <text evidence="2">Belongs to the FlgD family.</text>
</comment>
<keyword id="KW-1005">Bacterial flagellum biogenesis</keyword>
<protein>
    <recommendedName>
        <fullName>Basal-body rod modification protein FlgD</fullName>
    </recommendedName>
</protein>
<gene>
    <name type="primary">flgD</name>
    <name type="ordered locus">BUsg_327</name>
</gene>
<evidence type="ECO:0000250" key="1"/>
<evidence type="ECO:0000305" key="2"/>
<proteinExistence type="inferred from homology"/>
<sequence length="226" mass="24835">MGTVNINSSINNNIIENNTNNVKNNSNALDLQKNFLSLLMAQMKNQDPTDPIKNSELTSQLAQINTATGIERLNSTVGIFSNKINQSQNIQVSSLIGHHVMIPSSQIVHTKGIETKYGIELISDATAVNIQITDKNGKIIHIQKIKNLKSGIHSLTWDGQNLDKEDMKTEKYNVTVIAKNQNREIPVQVLSEALVNSIITSSSIDPIIDLGTVGTVTLSKIRKILK</sequence>
<reference key="1">
    <citation type="journal article" date="2002" name="Science">
        <title>50 million years of genomic stasis in endosymbiotic bacteria.</title>
        <authorList>
            <person name="Tamas I."/>
            <person name="Klasson L."/>
            <person name="Canbaeck B."/>
            <person name="Naeslund A.K."/>
            <person name="Eriksson A.-S."/>
            <person name="Wernegreen J.J."/>
            <person name="Sandstroem J.P."/>
            <person name="Moran N.A."/>
            <person name="Andersson S.G.E."/>
        </authorList>
    </citation>
    <scope>NUCLEOTIDE SEQUENCE [LARGE SCALE GENOMIC DNA]</scope>
    <source>
        <strain>Sg</strain>
    </source>
</reference>
<name>FLGD_BUCAP</name>
<feature type="chain" id="PRO_0000180811" description="Basal-body rod modification protein FlgD">
    <location>
        <begin position="1"/>
        <end position="226"/>
    </location>
</feature>
<organism>
    <name type="scientific">Buchnera aphidicola subsp. Schizaphis graminum (strain Sg)</name>
    <dbReference type="NCBI Taxonomy" id="198804"/>
    <lineage>
        <taxon>Bacteria</taxon>
        <taxon>Pseudomonadati</taxon>
        <taxon>Pseudomonadota</taxon>
        <taxon>Gammaproteobacteria</taxon>
        <taxon>Enterobacterales</taxon>
        <taxon>Erwiniaceae</taxon>
        <taxon>Buchnera</taxon>
    </lineage>
</organism>
<accession>Q8K9K7</accession>